<comment type="function">
    <text evidence="2">Catalyzes the hydrolysis of fructose 1,6-bisphosphate to fructose 6-phosphate in the presence of divalent cations, acting as a rate-limiting enzyme in gluconeogenesis. Plays a role in regulating glucose sensing and insulin secretion of pancreatic beta-cells. Appears to modulate glycerol gluconeogenesis in liver. Important regulator of appetite and adiposity; increased expression of the protein in liver after nutrient excess increases circulating satiety hormones and reduces appetite-stimulating neuropeptides and thus seems to provide a feedback mechanism to limit weight gain.</text>
</comment>
<comment type="catalytic activity">
    <reaction evidence="4">
        <text>beta-D-fructose 1,6-bisphosphate + H2O = beta-D-fructose 6-phosphate + phosphate</text>
        <dbReference type="Rhea" id="RHEA:11064"/>
        <dbReference type="ChEBI" id="CHEBI:15377"/>
        <dbReference type="ChEBI" id="CHEBI:32966"/>
        <dbReference type="ChEBI" id="CHEBI:43474"/>
        <dbReference type="ChEBI" id="CHEBI:57634"/>
        <dbReference type="EC" id="3.1.3.11"/>
    </reaction>
</comment>
<comment type="cofactor">
    <cofactor evidence="1">
        <name>Mg(2+)</name>
        <dbReference type="ChEBI" id="CHEBI:18420"/>
    </cofactor>
    <text evidence="1">Binds 3 Mg(2+) ions per subunit.</text>
</comment>
<comment type="activity regulation">
    <text evidence="4">Subject to complex allosteric regulation. The enzyme can assume an active R-state, or an inactive T-state. Intermediate conformations may exist. AMP acts as an allosteric inhibitor. AMP binding affects the turnover of bound substrate and not the affinity for substrate. Fructose 2,6-bisphosphate acts as a competitive inhibitor. Fructose 2,6-bisphosphate and AMP have synergistic effects.</text>
</comment>
<comment type="pathway">
    <text>Carbohydrate biosynthesis; gluconeogenesis.</text>
</comment>
<comment type="subunit">
    <text evidence="1">Homotetramer.</text>
</comment>
<comment type="similarity">
    <text evidence="7">Belongs to the FBPase class 1 family.</text>
</comment>
<proteinExistence type="evidence at protein level"/>
<organism>
    <name type="scientific">Rattus norvegicus</name>
    <name type="common">Rat</name>
    <dbReference type="NCBI Taxonomy" id="10116"/>
    <lineage>
        <taxon>Eukaryota</taxon>
        <taxon>Metazoa</taxon>
        <taxon>Chordata</taxon>
        <taxon>Craniata</taxon>
        <taxon>Vertebrata</taxon>
        <taxon>Euteleostomi</taxon>
        <taxon>Mammalia</taxon>
        <taxon>Eutheria</taxon>
        <taxon>Euarchontoglires</taxon>
        <taxon>Glires</taxon>
        <taxon>Rodentia</taxon>
        <taxon>Myomorpha</taxon>
        <taxon>Muroidea</taxon>
        <taxon>Muridae</taxon>
        <taxon>Murinae</taxon>
        <taxon>Rattus</taxon>
    </lineage>
</organism>
<name>F16P1_RAT</name>
<feature type="initiator methionine" description="Removed" evidence="5 6">
    <location>
        <position position="1"/>
    </location>
</feature>
<feature type="chain" id="PRO_0000200502" description="Fructose-1,6-bisphosphatase 1">
    <location>
        <begin position="2"/>
        <end position="363"/>
    </location>
</feature>
<feature type="binding site" evidence="1">
    <location>
        <begin position="18"/>
        <end position="22"/>
    </location>
    <ligand>
        <name>AMP</name>
        <dbReference type="ChEBI" id="CHEBI:456215"/>
    </ligand>
</feature>
<feature type="binding site" evidence="1">
    <location>
        <begin position="28"/>
        <end position="32"/>
    </location>
    <ligand>
        <name>AMP</name>
        <dbReference type="ChEBI" id="CHEBI:456215"/>
    </ligand>
</feature>
<feature type="binding site" evidence="1">
    <location>
        <position position="69"/>
    </location>
    <ligand>
        <name>Mg(2+)</name>
        <dbReference type="ChEBI" id="CHEBI:18420"/>
        <label>1</label>
    </ligand>
</feature>
<feature type="binding site" evidence="1">
    <location>
        <position position="98"/>
    </location>
    <ligand>
        <name>Mg(2+)</name>
        <dbReference type="ChEBI" id="CHEBI:18420"/>
        <label>1</label>
    </ligand>
</feature>
<feature type="binding site" evidence="1">
    <location>
        <position position="98"/>
    </location>
    <ligand>
        <name>Mg(2+)</name>
        <dbReference type="ChEBI" id="CHEBI:18420"/>
        <label>2</label>
    </ligand>
</feature>
<feature type="binding site" evidence="1">
    <location>
        <begin position="113"/>
        <end position="114"/>
    </location>
    <ligand>
        <name>AMP</name>
        <dbReference type="ChEBI" id="CHEBI:456215"/>
    </ligand>
</feature>
<feature type="binding site" evidence="1">
    <location>
        <position position="119"/>
    </location>
    <ligand>
        <name>Mg(2+)</name>
        <dbReference type="ChEBI" id="CHEBI:18420"/>
        <label>2</label>
    </ligand>
</feature>
<feature type="binding site" evidence="1">
    <location>
        <position position="119"/>
    </location>
    <ligand>
        <name>Mg(2+)</name>
        <dbReference type="ChEBI" id="CHEBI:18420"/>
        <label>3</label>
    </ligand>
</feature>
<feature type="binding site" evidence="1">
    <location>
        <position position="121"/>
    </location>
    <ligand>
        <name>Mg(2+)</name>
        <dbReference type="ChEBI" id="CHEBI:18420"/>
        <label>2</label>
    </ligand>
</feature>
<feature type="binding site" evidence="1">
    <location>
        <begin position="122"/>
        <end position="125"/>
    </location>
    <ligand>
        <name>substrate</name>
    </ligand>
</feature>
<feature type="binding site" evidence="1">
    <location>
        <position position="122"/>
    </location>
    <ligand>
        <name>Mg(2+)</name>
        <dbReference type="ChEBI" id="CHEBI:18420"/>
        <label>3</label>
    </ligand>
</feature>
<feature type="binding site" evidence="1">
    <location>
        <position position="141"/>
    </location>
    <ligand>
        <name>AMP</name>
        <dbReference type="ChEBI" id="CHEBI:456215"/>
    </ligand>
</feature>
<feature type="binding site" evidence="1">
    <location>
        <begin position="213"/>
        <end position="216"/>
    </location>
    <ligand>
        <name>substrate</name>
    </ligand>
</feature>
<feature type="binding site" evidence="1">
    <location>
        <begin position="244"/>
        <end position="249"/>
    </location>
    <ligand>
        <name>substrate</name>
    </ligand>
</feature>
<feature type="binding site" evidence="1">
    <location>
        <position position="265"/>
    </location>
    <ligand>
        <name>substrate</name>
    </ligand>
</feature>
<feature type="binding site" evidence="1">
    <location>
        <begin position="275"/>
        <end position="277"/>
    </location>
    <ligand>
        <name>substrate</name>
    </ligand>
</feature>
<feature type="binding site" evidence="1">
    <location>
        <position position="281"/>
    </location>
    <ligand>
        <name>Mg(2+)</name>
        <dbReference type="ChEBI" id="CHEBI:18420"/>
        <label>3</label>
    </ligand>
</feature>
<feature type="modified residue" description="N-acetylvaline" evidence="5">
    <location>
        <position position="2"/>
    </location>
</feature>
<feature type="modified residue" description="N6-succinyllysine" evidence="3">
    <location>
        <position position="151"/>
    </location>
</feature>
<feature type="modified residue" description="Phosphotyrosine" evidence="8">
    <location>
        <position position="216"/>
    </location>
</feature>
<feature type="modified residue" description="Phosphotyrosine" evidence="3">
    <location>
        <position position="245"/>
    </location>
</feature>
<feature type="modified residue" description="Phosphotyrosine" evidence="2">
    <location>
        <position position="265"/>
    </location>
</feature>
<feature type="modified residue" description="Phosphoserine" evidence="8">
    <location>
        <position position="339"/>
    </location>
</feature>
<feature type="modified residue" description="Phosphoserine" evidence="8">
    <location>
        <position position="353"/>
    </location>
</feature>
<feature type="mutagenesis site" description="Reduces affinity for substrate 20-fold, and decreases affinity for the competitive inhibitor fructose 2,6-bisphosphate 500-fold." evidence="4">
    <original>K</original>
    <variation>A</variation>
    <location>
        <position position="275"/>
    </location>
</feature>
<feature type="sequence conflict" description="In Ref. 2; AAA41131." evidence="7" ref="2">
    <original>P</original>
    <variation>A</variation>
    <location>
        <position position="148"/>
    </location>
</feature>
<evidence type="ECO:0000250" key="1">
    <source>
        <dbReference type="UniProtKB" id="P00636"/>
    </source>
</evidence>
<evidence type="ECO:0000250" key="2">
    <source>
        <dbReference type="UniProtKB" id="P09467"/>
    </source>
</evidence>
<evidence type="ECO:0000250" key="3">
    <source>
        <dbReference type="UniProtKB" id="Q9QXD6"/>
    </source>
</evidence>
<evidence type="ECO:0000269" key="4">
    <source>
    </source>
</evidence>
<evidence type="ECO:0000269" key="5">
    <source>
    </source>
</evidence>
<evidence type="ECO:0000269" key="6">
    <source>
    </source>
</evidence>
<evidence type="ECO:0000305" key="7"/>
<evidence type="ECO:0007744" key="8">
    <source>
    </source>
</evidence>
<protein>
    <recommendedName>
        <fullName>Fructose-1,6-bisphosphatase 1</fullName>
        <shortName>FBPase 1</shortName>
        <ecNumber evidence="4">3.1.3.11</ecNumber>
    </recommendedName>
    <alternativeName>
        <fullName>D-fructose-1,6-bisphosphate 1-phosphohydrolase 1</fullName>
    </alternativeName>
    <alternativeName>
        <fullName>Liver FBPase</fullName>
    </alternativeName>
</protein>
<sequence length="363" mass="39609">MVDHAPFETDISTLTRFVLEEGRKAGGTGEMTQLLNSLCTAIKAISSAVRQAGIAQLYGIAGSTNVTGDQVKKLDILSNDLVINMLKSSYATCVLVSEEDTHAIIIEPEKRGKYVVCFDPLDGSSNIDCLASIGTIFGIYRKTSANEPSEKDALQPGRNLVAAGYALYGSATMLVLAMNCGVNCFMLDPSIGEFILVDRDVKIKKKGNIYSINEGYAKDFDPAINEYIQRKKFPPDNSAPYGARYVGSMVADVHRTLVYGGIFLYPANKKNPSGKLRLLYECNPIAYVMEKAGGLATTGNEDILDIVPTEIHQKAPVIMGSTEDVQEFLEIYNKDKAKSRPSLPLPQSRARESPVHSICDELF</sequence>
<keyword id="KW-0007">Acetylation</keyword>
<keyword id="KW-0021">Allosteric enzyme</keyword>
<keyword id="KW-0119">Carbohydrate metabolism</keyword>
<keyword id="KW-0903">Direct protein sequencing</keyword>
<keyword id="KW-0312">Gluconeogenesis</keyword>
<keyword id="KW-0378">Hydrolase</keyword>
<keyword id="KW-0460">Magnesium</keyword>
<keyword id="KW-0479">Metal-binding</keyword>
<keyword id="KW-0597">Phosphoprotein</keyword>
<keyword id="KW-1185">Reference proteome</keyword>
<accession>P19112</accession>
<accession>Q64594</accession>
<dbReference type="EC" id="3.1.3.11" evidence="4"/>
<dbReference type="EMBL" id="J04112">
    <property type="protein sequence ID" value="AAA60739.1"/>
    <property type="molecule type" value="mRNA"/>
</dbReference>
<dbReference type="EMBL" id="M57284">
    <property type="protein sequence ID" value="AAA41131.1"/>
    <property type="molecule type" value="Genomic_DNA"/>
</dbReference>
<dbReference type="EMBL" id="M57274">
    <property type="protein sequence ID" value="AAA41131.1"/>
    <property type="status" value="JOINED"/>
    <property type="molecule type" value="Genomic_DNA"/>
</dbReference>
<dbReference type="EMBL" id="M57279">
    <property type="protein sequence ID" value="AAA41131.1"/>
    <property type="status" value="JOINED"/>
    <property type="molecule type" value="Genomic_DNA"/>
</dbReference>
<dbReference type="EMBL" id="M57278">
    <property type="protein sequence ID" value="AAA41131.1"/>
    <property type="status" value="JOINED"/>
    <property type="molecule type" value="Genomic_DNA"/>
</dbReference>
<dbReference type="EMBL" id="M57282">
    <property type="protein sequence ID" value="AAA41131.1"/>
    <property type="status" value="JOINED"/>
    <property type="molecule type" value="Genomic_DNA"/>
</dbReference>
<dbReference type="EMBL" id="M57281">
    <property type="protein sequence ID" value="AAA41131.1"/>
    <property type="status" value="JOINED"/>
    <property type="molecule type" value="Genomic_DNA"/>
</dbReference>
<dbReference type="EMBL" id="M86240">
    <property type="protein sequence ID" value="AAA86425.1"/>
    <property type="molecule type" value="mRNA"/>
</dbReference>
<dbReference type="EMBL" id="BC078894">
    <property type="protein sequence ID" value="AAH78894.1"/>
    <property type="molecule type" value="mRNA"/>
</dbReference>
<dbReference type="EMBL" id="BC078895">
    <property type="protein sequence ID" value="AAH78895.1"/>
    <property type="molecule type" value="mRNA"/>
</dbReference>
<dbReference type="PIR" id="A31342">
    <property type="entry name" value="A31342"/>
</dbReference>
<dbReference type="RefSeq" id="NP_036690.2">
    <property type="nucleotide sequence ID" value="NM_012558.3"/>
</dbReference>
<dbReference type="SMR" id="P19112"/>
<dbReference type="FunCoup" id="P19112">
    <property type="interactions" value="890"/>
</dbReference>
<dbReference type="STRING" id="10116.ENSRNOP00000023685"/>
<dbReference type="BindingDB" id="P19112"/>
<dbReference type="ChEMBL" id="CHEMBL4391"/>
<dbReference type="iPTMnet" id="P19112"/>
<dbReference type="PhosphoSitePlus" id="P19112"/>
<dbReference type="PaxDb" id="10116-ENSRNOP00000023685"/>
<dbReference type="Ensembl" id="ENSRNOT00000023685.7">
    <property type="protein sequence ID" value="ENSRNOP00000023685.6"/>
    <property type="gene ID" value="ENSRNOG00000017597.7"/>
</dbReference>
<dbReference type="GeneID" id="24362"/>
<dbReference type="KEGG" id="rno:24362"/>
<dbReference type="UCSC" id="RGD:2595">
    <property type="organism name" value="rat"/>
</dbReference>
<dbReference type="AGR" id="RGD:2595"/>
<dbReference type="CTD" id="2203"/>
<dbReference type="RGD" id="2595">
    <property type="gene designation" value="Fbp1"/>
</dbReference>
<dbReference type="eggNOG" id="KOG1458">
    <property type="taxonomic scope" value="Eukaryota"/>
</dbReference>
<dbReference type="GeneTree" id="ENSGT00390000015513"/>
<dbReference type="InParanoid" id="P19112"/>
<dbReference type="OMA" id="YIPENCP"/>
<dbReference type="OrthoDB" id="10256725at2759"/>
<dbReference type="PhylomeDB" id="P19112"/>
<dbReference type="BRENDA" id="3.1.3.11">
    <property type="organism ID" value="5301"/>
</dbReference>
<dbReference type="Reactome" id="R-RNO-70263">
    <property type="pathway name" value="Gluconeogenesis"/>
</dbReference>
<dbReference type="SABIO-RK" id="P19112"/>
<dbReference type="UniPathway" id="UPA00138"/>
<dbReference type="PRO" id="PR:P19112"/>
<dbReference type="Proteomes" id="UP000002494">
    <property type="component" value="Chromosome 17"/>
</dbReference>
<dbReference type="GO" id="GO:0005737">
    <property type="term" value="C:cytoplasm"/>
    <property type="evidence" value="ECO:0000250"/>
    <property type="project" value="UniProtKB"/>
</dbReference>
<dbReference type="GO" id="GO:0005829">
    <property type="term" value="C:cytosol"/>
    <property type="evidence" value="ECO:0000318"/>
    <property type="project" value="GO_Central"/>
</dbReference>
<dbReference type="GO" id="GO:0005615">
    <property type="term" value="C:extracellular space"/>
    <property type="evidence" value="ECO:0000314"/>
    <property type="project" value="RGD"/>
</dbReference>
<dbReference type="GO" id="GO:0005634">
    <property type="term" value="C:nucleus"/>
    <property type="evidence" value="ECO:0000266"/>
    <property type="project" value="RGD"/>
</dbReference>
<dbReference type="GO" id="GO:0016208">
    <property type="term" value="F:AMP binding"/>
    <property type="evidence" value="ECO:0000250"/>
    <property type="project" value="UniProtKB"/>
</dbReference>
<dbReference type="GO" id="GO:0042132">
    <property type="term" value="F:fructose 1,6-bisphosphate 1-phosphatase activity"/>
    <property type="evidence" value="ECO:0000314"/>
    <property type="project" value="RGD"/>
</dbReference>
<dbReference type="GO" id="GO:0042802">
    <property type="term" value="F:identical protein binding"/>
    <property type="evidence" value="ECO:0000250"/>
    <property type="project" value="UniProtKB"/>
</dbReference>
<dbReference type="GO" id="GO:0046872">
    <property type="term" value="F:metal ion binding"/>
    <property type="evidence" value="ECO:0000250"/>
    <property type="project" value="UniProtKB"/>
</dbReference>
<dbReference type="GO" id="GO:0048029">
    <property type="term" value="F:monosaccharide binding"/>
    <property type="evidence" value="ECO:0000314"/>
    <property type="project" value="RGD"/>
</dbReference>
<dbReference type="GO" id="GO:0061629">
    <property type="term" value="F:RNA polymerase II-specific DNA-binding transcription factor binding"/>
    <property type="evidence" value="ECO:0000266"/>
    <property type="project" value="RGD"/>
</dbReference>
<dbReference type="GO" id="GO:0071475">
    <property type="term" value="P:cellular hyperosmotic salinity response"/>
    <property type="evidence" value="ECO:0000270"/>
    <property type="project" value="RGD"/>
</dbReference>
<dbReference type="GO" id="GO:0071477">
    <property type="term" value="P:cellular hypotonic salinity response"/>
    <property type="evidence" value="ECO:0000270"/>
    <property type="project" value="RGD"/>
</dbReference>
<dbReference type="GO" id="GO:0071320">
    <property type="term" value="P:cellular response to cAMP"/>
    <property type="evidence" value="ECO:0000270"/>
    <property type="project" value="RGD"/>
</dbReference>
<dbReference type="GO" id="GO:0032869">
    <property type="term" value="P:cellular response to insulin stimulus"/>
    <property type="evidence" value="ECO:0000270"/>
    <property type="project" value="RGD"/>
</dbReference>
<dbReference type="GO" id="GO:0071286">
    <property type="term" value="P:cellular response to magnesium ion"/>
    <property type="evidence" value="ECO:0000250"/>
    <property type="project" value="UniProtKB"/>
</dbReference>
<dbReference type="GO" id="GO:1904628">
    <property type="term" value="P:cellular response to phorbol 13-acetate 12-myristate"/>
    <property type="evidence" value="ECO:0000270"/>
    <property type="project" value="RGD"/>
</dbReference>
<dbReference type="GO" id="GO:0097403">
    <property type="term" value="P:cellular response to raffinose"/>
    <property type="evidence" value="ECO:0000270"/>
    <property type="project" value="RGD"/>
</dbReference>
<dbReference type="GO" id="GO:0071466">
    <property type="term" value="P:cellular response to xenobiotic stimulus"/>
    <property type="evidence" value="ECO:0000250"/>
    <property type="project" value="UniProtKB"/>
</dbReference>
<dbReference type="GO" id="GO:0030388">
    <property type="term" value="P:fructose 1,6-bisphosphate metabolic process"/>
    <property type="evidence" value="ECO:0000318"/>
    <property type="project" value="GO_Central"/>
</dbReference>
<dbReference type="GO" id="GO:0006002">
    <property type="term" value="P:fructose 6-phosphate metabolic process"/>
    <property type="evidence" value="ECO:0000314"/>
    <property type="project" value="RGD"/>
</dbReference>
<dbReference type="GO" id="GO:0006000">
    <property type="term" value="P:fructose metabolic process"/>
    <property type="evidence" value="ECO:0000318"/>
    <property type="project" value="GO_Central"/>
</dbReference>
<dbReference type="GO" id="GO:0006094">
    <property type="term" value="P:gluconeogenesis"/>
    <property type="evidence" value="ECO:0000314"/>
    <property type="project" value="RGD"/>
</dbReference>
<dbReference type="GO" id="GO:0030308">
    <property type="term" value="P:negative regulation of cell growth"/>
    <property type="evidence" value="ECO:0000250"/>
    <property type="project" value="UniProtKB"/>
</dbReference>
<dbReference type="GO" id="GO:0045820">
    <property type="term" value="P:negative regulation of glycolytic process"/>
    <property type="evidence" value="ECO:0000250"/>
    <property type="project" value="UniProtKB"/>
</dbReference>
<dbReference type="GO" id="GO:0046580">
    <property type="term" value="P:negative regulation of Ras protein signal transduction"/>
    <property type="evidence" value="ECO:0000250"/>
    <property type="project" value="UniProtKB"/>
</dbReference>
<dbReference type="GO" id="GO:0000122">
    <property type="term" value="P:negative regulation of transcription by RNA polymerase II"/>
    <property type="evidence" value="ECO:0000266"/>
    <property type="project" value="RGD"/>
</dbReference>
<dbReference type="GO" id="GO:0006111">
    <property type="term" value="P:regulation of gluconeogenesis"/>
    <property type="evidence" value="ECO:0000250"/>
    <property type="project" value="UniProtKB"/>
</dbReference>
<dbReference type="GO" id="GO:0031667">
    <property type="term" value="P:response to nutrient levels"/>
    <property type="evidence" value="ECO:0000270"/>
    <property type="project" value="RGD"/>
</dbReference>
<dbReference type="CDD" id="cd00354">
    <property type="entry name" value="FBPase"/>
    <property type="match status" value="1"/>
</dbReference>
<dbReference type="FunFam" id="3.30.540.10:FF:000037">
    <property type="entry name" value="Fructose-1,6-bisphosphatase 1"/>
    <property type="match status" value="1"/>
</dbReference>
<dbReference type="FunFam" id="3.40.190.80:FF:000001">
    <property type="entry name" value="Fructose-1,6-bisphosphatase class 1"/>
    <property type="match status" value="1"/>
</dbReference>
<dbReference type="Gene3D" id="3.40.190.80">
    <property type="match status" value="1"/>
</dbReference>
<dbReference type="Gene3D" id="3.30.540.10">
    <property type="entry name" value="Fructose-1,6-Bisphosphatase, subunit A, domain 1"/>
    <property type="match status" value="1"/>
</dbReference>
<dbReference type="HAMAP" id="MF_01855">
    <property type="entry name" value="FBPase_class1"/>
    <property type="match status" value="1"/>
</dbReference>
<dbReference type="InterPro" id="IPR044015">
    <property type="entry name" value="FBPase_C_dom"/>
</dbReference>
<dbReference type="InterPro" id="IPR000146">
    <property type="entry name" value="FBPase_class-1"/>
</dbReference>
<dbReference type="InterPro" id="IPR033391">
    <property type="entry name" value="FBPase_N"/>
</dbReference>
<dbReference type="InterPro" id="IPR028343">
    <property type="entry name" value="FBPtase"/>
</dbReference>
<dbReference type="InterPro" id="IPR020548">
    <property type="entry name" value="Fructose_bisphosphatase_AS"/>
</dbReference>
<dbReference type="NCBIfam" id="NF006778">
    <property type="entry name" value="PRK09293.1-1"/>
    <property type="match status" value="1"/>
</dbReference>
<dbReference type="PANTHER" id="PTHR11556:SF11">
    <property type="entry name" value="FRUCTOSE-1,6-BISPHOSPHATASE 1"/>
    <property type="match status" value="1"/>
</dbReference>
<dbReference type="PANTHER" id="PTHR11556">
    <property type="entry name" value="FRUCTOSE-1,6-BISPHOSPHATASE-RELATED"/>
    <property type="match status" value="1"/>
</dbReference>
<dbReference type="Pfam" id="PF00316">
    <property type="entry name" value="FBPase"/>
    <property type="match status" value="1"/>
</dbReference>
<dbReference type="Pfam" id="PF18913">
    <property type="entry name" value="FBPase_C"/>
    <property type="match status" value="1"/>
</dbReference>
<dbReference type="PIRSF" id="PIRSF500210">
    <property type="entry name" value="FBPtase"/>
    <property type="match status" value="1"/>
</dbReference>
<dbReference type="PIRSF" id="PIRSF000904">
    <property type="entry name" value="FBPtase_SBPase"/>
    <property type="match status" value="1"/>
</dbReference>
<dbReference type="PRINTS" id="PR00115">
    <property type="entry name" value="F16BPHPHTASE"/>
</dbReference>
<dbReference type="SUPFAM" id="SSF56655">
    <property type="entry name" value="Carbohydrate phosphatase"/>
    <property type="match status" value="1"/>
</dbReference>
<dbReference type="PROSITE" id="PS00124">
    <property type="entry name" value="FBPASE"/>
    <property type="match status" value="1"/>
</dbReference>
<gene>
    <name type="primary">Fbp1</name>
    <name type="synonym">Fbp</name>
</gene>
<reference key="1">
    <citation type="journal article" date="1988" name="Proc. Natl. Acad. Sci. U.S.A.">
        <title>cDNA sequence of rat liver fructose-1,6-bisphosphatase and evidence for down-regulation of its mRNA by insulin.</title>
        <authorList>
            <person name="El-Maghrabi M.R."/>
            <person name="Pilkis J."/>
            <person name="Marker A.J."/>
            <person name="Colosia A.D."/>
            <person name="D'Angelo G."/>
            <person name="Fraser B.A."/>
            <person name="Pilkis S.J."/>
        </authorList>
    </citation>
    <scope>NUCLEOTIDE SEQUENCE [MRNA]</scope>
    <scope>PARTIAL PROTEIN SEQUENCE</scope>
    <source>
        <tissue>Liver</tissue>
    </source>
</reference>
<reference key="2">
    <citation type="journal article" date="1991" name="J. Biol. Chem.">
        <title>The rat fructose-1,6-bisphosphatase gene. Structure and regulation of expression.</title>
        <authorList>
            <person name="El-Maghrabi M.R."/>
            <person name="Lange A.J."/>
            <person name="Kummel L."/>
            <person name="Pilkis S.J."/>
        </authorList>
    </citation>
    <scope>NUCLEOTIDE SEQUENCE [GENOMIC DNA]</scope>
    <source>
        <strain>Sprague-Dawley</strain>
    </source>
</reference>
<reference key="3">
    <citation type="journal article" date="1995" name="Differentiation">
        <title>Liver fructose-1,6-bisphosphatase cDNA: trans-complementation of fission yeast and characterization of two human transcripts.</title>
        <authorList>
            <person name="Bertolotti R."/>
            <person name="Armbruster-Hilbert L."/>
            <person name="Okayama H."/>
        </authorList>
    </citation>
    <scope>NUCLEOTIDE SEQUENCE [MRNA]</scope>
</reference>
<reference key="4">
    <citation type="journal article" date="2004" name="Genome Res.">
        <title>The status, quality, and expansion of the NIH full-length cDNA project: the Mammalian Gene Collection (MGC).</title>
        <authorList>
            <consortium name="The MGC Project Team"/>
        </authorList>
    </citation>
    <scope>NUCLEOTIDE SEQUENCE [LARGE SCALE MRNA]</scope>
    <source>
        <tissue>Testis</tissue>
    </source>
</reference>
<reference key="5">
    <citation type="journal article" date="1983" name="J. Biol. Chem.">
        <title>Amino acid sequence of the COOH-terminal region of fructose-1,6-bisphosphatases in relation to cyclic AMP-dependent phosphorylation.</title>
        <authorList>
            <person name="Rittenhouse J."/>
            <person name="Chatterjee T."/>
            <person name="Marcus F."/>
            <person name="Reardon I."/>
            <person name="Heinrikson R.L."/>
        </authorList>
    </citation>
    <scope>PROTEIN SEQUENCE OF 320-362</scope>
    <source>
        <tissue>Liver</tissue>
    </source>
</reference>
<reference key="6">
    <citation type="journal article" date="1992" name="J. Biol. Chem.">
        <title>Lysine 274 is essential for fructose 2,6-bisphosphate inhibition of fructose-1,6-bisphosphatase.</title>
        <authorList>
            <person name="el-Maghrabi M.R."/>
            <person name="Austin L.R."/>
            <person name="Correia J.J."/>
            <person name="Pilkis S.J."/>
        </authorList>
    </citation>
    <scope>CATALYTIC ACTIVITY</scope>
    <scope>MUTAGENESIS OF LYS-275</scope>
    <scope>ACTIVITY REGULATION</scope>
</reference>
<reference key="7">
    <citation type="journal article" date="2009" name="J. Proteomics">
        <title>Identification of novel protein targets regulated by maternal dietary fatty acid composition in neonatal rat liver.</title>
        <authorList>
            <person name="Novak E.M."/>
            <person name="Lee E.K."/>
            <person name="Innis S.M."/>
            <person name="Keller B.O."/>
        </authorList>
    </citation>
    <scope>ACETYLATION AT VAL-2</scope>
</reference>
<reference key="8">
    <citation type="journal article" date="2012" name="Nat. Commun.">
        <title>Quantitative maps of protein phosphorylation sites across 14 different rat organs and tissues.</title>
        <authorList>
            <person name="Lundby A."/>
            <person name="Secher A."/>
            <person name="Lage K."/>
            <person name="Nordsborg N.B."/>
            <person name="Dmytriyev A."/>
            <person name="Lundby C."/>
            <person name="Olsen J.V."/>
        </authorList>
    </citation>
    <scope>PHOSPHORYLATION [LARGE SCALE ANALYSIS] AT TYR-216; SER-339 AND SER-353</scope>
    <scope>IDENTIFICATION BY MASS SPECTROMETRY [LARGE SCALE ANALYSIS]</scope>
</reference>